<dbReference type="EMBL" id="L09548">
    <property type="protein sequence ID" value="AAA17034.1"/>
    <property type="molecule type" value="Unassigned_DNA"/>
</dbReference>
<dbReference type="EMBL" id="AY261361">
    <property type="status" value="NOT_ANNOTATED_CDS"/>
    <property type="molecule type" value="Genomic_DNA"/>
</dbReference>
<dbReference type="SMR" id="Q07819"/>
<dbReference type="Proteomes" id="UP000000860">
    <property type="component" value="Segment"/>
</dbReference>
<dbReference type="GO" id="GO:0044165">
    <property type="term" value="C:host cell endoplasmic reticulum"/>
    <property type="evidence" value="ECO:0007669"/>
    <property type="project" value="UniProtKB-SubCell"/>
</dbReference>
<dbReference type="GO" id="GO:0033650">
    <property type="term" value="C:host cell mitochondrion"/>
    <property type="evidence" value="ECO:0007669"/>
    <property type="project" value="UniProtKB-SubCell"/>
</dbReference>
<dbReference type="GO" id="GO:0051400">
    <property type="term" value="F:BH domain binding"/>
    <property type="evidence" value="ECO:0007669"/>
    <property type="project" value="TreeGrafter"/>
</dbReference>
<dbReference type="GO" id="GO:0042981">
    <property type="term" value="P:regulation of apoptotic process"/>
    <property type="evidence" value="ECO:0007669"/>
    <property type="project" value="InterPro"/>
</dbReference>
<dbReference type="GO" id="GO:0033668">
    <property type="term" value="P:symbiont-mediated suppression of host apoptosis"/>
    <property type="evidence" value="ECO:0007669"/>
    <property type="project" value="UniProtKB-KW"/>
</dbReference>
<dbReference type="Gene3D" id="1.10.437.10">
    <property type="entry name" value="Blc2-like"/>
    <property type="match status" value="1"/>
</dbReference>
<dbReference type="InterPro" id="IPR036834">
    <property type="entry name" value="Bcl-2-like_sf"/>
</dbReference>
<dbReference type="InterPro" id="IPR046371">
    <property type="entry name" value="Bcl-2_BH1-3"/>
</dbReference>
<dbReference type="InterPro" id="IPR026298">
    <property type="entry name" value="Bcl-2_fam"/>
</dbReference>
<dbReference type="InterPro" id="IPR002475">
    <property type="entry name" value="Bcl2-like"/>
</dbReference>
<dbReference type="InterPro" id="IPR020717">
    <property type="entry name" value="Bcl2_BH1_motif_CS"/>
</dbReference>
<dbReference type="InterPro" id="IPR020726">
    <property type="entry name" value="Bcl2_BH2_motif_CS"/>
</dbReference>
<dbReference type="PANTHER" id="PTHR11256:SF62">
    <property type="entry name" value="BCL-2 BCL-2 HOMOLOGY REGION 1-3 DOMAIN-CONTAINING PROTEIN"/>
    <property type="match status" value="1"/>
</dbReference>
<dbReference type="PANTHER" id="PTHR11256">
    <property type="entry name" value="BCL-2 RELATED"/>
    <property type="match status" value="1"/>
</dbReference>
<dbReference type="Pfam" id="PF00452">
    <property type="entry name" value="Bcl-2"/>
    <property type="match status" value="1"/>
</dbReference>
<dbReference type="PRINTS" id="PR01862">
    <property type="entry name" value="BCL2FAMILY"/>
</dbReference>
<dbReference type="SMART" id="SM00337">
    <property type="entry name" value="BCL"/>
    <property type="match status" value="1"/>
</dbReference>
<dbReference type="SUPFAM" id="SSF56854">
    <property type="entry name" value="Bcl-2 inhibitors of programmed cell death"/>
    <property type="match status" value="1"/>
</dbReference>
<dbReference type="PROSITE" id="PS50062">
    <property type="entry name" value="BCL2_FAMILY"/>
    <property type="match status" value="1"/>
</dbReference>
<dbReference type="PROSITE" id="PS01080">
    <property type="entry name" value="BH1"/>
    <property type="match status" value="1"/>
</dbReference>
<dbReference type="PROSITE" id="PS01258">
    <property type="entry name" value="BH2"/>
    <property type="match status" value="1"/>
</dbReference>
<reference key="1">
    <citation type="journal article" date="1993" name="J. Virol.">
        <title>An African swine fever virus gene with similarity to the proto-oncogene bcl-2 and the Epstein-Barr virus gene BHRF1.</title>
        <authorList>
            <person name="Neilan J.G."/>
            <person name="Lu Z."/>
            <person name="Afonso C.L."/>
            <person name="Kutish G.F."/>
            <person name="Sussman M.D."/>
            <person name="Rock D.L."/>
        </authorList>
    </citation>
    <scope>NUCLEOTIDE SEQUENCE [GENOMIC DNA]</scope>
    <scope>INDUCTION</scope>
</reference>
<reference key="2">
    <citation type="submission" date="2003-03" db="EMBL/GenBank/DDBJ databases">
        <title>African swine fever virus genomes.</title>
        <authorList>
            <person name="Kutish G.F."/>
            <person name="Rock D.L."/>
        </authorList>
    </citation>
    <scope>NUCLEOTIDE SEQUENCE [LARGE SCALE GENOMIC DNA]</scope>
</reference>
<feature type="chain" id="PRO_0000002813" description="Apoptosis regulator Bcl-2 homolog">
    <location>
        <begin position="1"/>
        <end position="179"/>
    </location>
</feature>
<feature type="short sequence motif" description="BH1" evidence="2">
    <location>
        <begin position="76"/>
        <end position="95"/>
    </location>
</feature>
<feature type="short sequence motif" description="BH2" evidence="2">
    <location>
        <begin position="126"/>
        <end position="141"/>
    </location>
</feature>
<sequence length="179" mass="21068">MEGEELIYHNIINEILVGYIKYYMNDISEHELSPYQQQIKKILTYYDECLNKQVTITFSLTNAQEIKTQFTGVVTELFKDLINWGRICGFIVFSARMAKYCKDANNHLESTVITTAYNFMKHNLLPWMISHGGQEEFLAFSLHSDIYSVIFNIKYFLSKFCNHMFLRSCVQLLRNCNLI</sequence>
<protein>
    <recommendedName>
        <fullName>Apoptosis regulator Bcl-2 homolog</fullName>
    </recommendedName>
</protein>
<comment type="function">
    <text evidence="1">Suppresses apoptosis in host cell to promote the viral replication (By similarity). Has the ability to potentially bind to all the members of the proapoptotic Bcl-2 family (By similarity). Inhibits autophagy by interacting with host Beclin 1 (BECN1) (By similarity).</text>
</comment>
<comment type="subunit">
    <text evidence="1">Interacts with host BECN1 (via BH3 homology domain); this interaction allows the virus to inhibit BECN1, and thus autophagy (By similarity). Interacts with host BID (By similarity). Interacts with host BAX (By similarity).</text>
</comment>
<comment type="subcellular location">
    <subcellularLocation>
        <location evidence="1">Host mitochondrion</location>
    </subcellularLocation>
    <subcellularLocation>
        <location evidence="1">Host endoplasmic reticulum</location>
    </subcellularLocation>
</comment>
<comment type="induction">
    <text evidence="3">Expressed in the early phase of the viral replicative cycle (PubMed:8389936). Expressed in the late phase of the viral replicative cycle (PubMed:8389936).</text>
</comment>
<comment type="similarity">
    <text evidence="4">Belongs to the Bcl-2 family.</text>
</comment>
<name>ARBH_ASFM2</name>
<accession>Q07819</accession>
<keyword id="KW-0053">Apoptosis</keyword>
<keyword id="KW-0244">Early protein</keyword>
<keyword id="KW-1038">Host endoplasmic reticulum</keyword>
<keyword id="KW-1045">Host mitochondrion</keyword>
<keyword id="KW-0945">Host-virus interaction</keyword>
<keyword id="KW-1081">Inhibition of host apoptosis by viral BCL2-like protein</keyword>
<keyword id="KW-0426">Late protein</keyword>
<keyword id="KW-1119">Modulation of host cell apoptosis by virus</keyword>
<proteinExistence type="evidence at transcript level"/>
<organismHost>
    <name type="scientific">Ornithodoros</name>
    <name type="common">relapsing fever ticks</name>
    <dbReference type="NCBI Taxonomy" id="6937"/>
</organismHost>
<organismHost>
    <name type="scientific">Phacochoerus aethiopicus</name>
    <name type="common">Warthog</name>
    <dbReference type="NCBI Taxonomy" id="85517"/>
</organismHost>
<organismHost>
    <name type="scientific">Phacochoerus africanus</name>
    <name type="common">Warthog</name>
    <dbReference type="NCBI Taxonomy" id="41426"/>
</organismHost>
<organismHost>
    <name type="scientific">Potamochoerus larvatus</name>
    <name type="common">Bushpig</name>
    <dbReference type="NCBI Taxonomy" id="273792"/>
</organismHost>
<organismHost>
    <name type="scientific">Sus scrofa</name>
    <name type="common">Pig</name>
    <dbReference type="NCBI Taxonomy" id="9823"/>
</organismHost>
<gene>
    <name type="ordered locus">Mal-049</name>
    <name type="ORF">LMW5-HL</name>
</gene>
<evidence type="ECO:0000250" key="1">
    <source>
        <dbReference type="UniProtKB" id="P42485"/>
    </source>
</evidence>
<evidence type="ECO:0000255" key="2"/>
<evidence type="ECO:0000269" key="3">
    <source>
    </source>
</evidence>
<evidence type="ECO:0000305" key="4"/>
<organism>
    <name type="scientific">African swine fever virus (isolate Tick/Malawi/Lil 20-1/1983)</name>
    <name type="common">ASFV</name>
    <dbReference type="NCBI Taxonomy" id="10500"/>
    <lineage>
        <taxon>Viruses</taxon>
        <taxon>Varidnaviria</taxon>
        <taxon>Bamfordvirae</taxon>
        <taxon>Nucleocytoviricota</taxon>
        <taxon>Pokkesviricetes</taxon>
        <taxon>Asfuvirales</taxon>
        <taxon>Asfarviridae</taxon>
        <taxon>Asfivirus</taxon>
        <taxon>African swine fever virus</taxon>
    </lineage>
</organism>